<sequence length="154" mass="17481">MTIEVQENREPKIIEVTEIMKMLPHRYPFLLVDRVIDFEEGKWLKAIKNVTVNEPCFTGHFPESPIFPGVLILEAMAQATGVLAVATHGKMAQDELYYFAAIDNARFKRPVVPGDQLTFEVEFLKEMRGITKFTGKAFVDGKLVCEADLMCARK</sequence>
<evidence type="ECO:0000255" key="1">
    <source>
        <dbReference type="HAMAP-Rule" id="MF_00406"/>
    </source>
</evidence>
<feature type="chain" id="PRO_1000197269" description="3-hydroxyacyl-[acyl-carrier-protein] dehydratase FabZ">
    <location>
        <begin position="1"/>
        <end position="154"/>
    </location>
</feature>
<feature type="active site" evidence="1">
    <location>
        <position position="60"/>
    </location>
</feature>
<organism>
    <name type="scientific">Actinobacillus pleuropneumoniae serotype 3 (strain JL03)</name>
    <dbReference type="NCBI Taxonomy" id="434271"/>
    <lineage>
        <taxon>Bacteria</taxon>
        <taxon>Pseudomonadati</taxon>
        <taxon>Pseudomonadota</taxon>
        <taxon>Gammaproteobacteria</taxon>
        <taxon>Pasteurellales</taxon>
        <taxon>Pasteurellaceae</taxon>
        <taxon>Actinobacillus</taxon>
    </lineage>
</organism>
<keyword id="KW-0963">Cytoplasm</keyword>
<keyword id="KW-0441">Lipid A biosynthesis</keyword>
<keyword id="KW-0444">Lipid biosynthesis</keyword>
<keyword id="KW-0443">Lipid metabolism</keyword>
<keyword id="KW-0456">Lyase</keyword>
<accession>B0BTR2</accession>
<comment type="function">
    <text evidence="1">Involved in unsaturated fatty acids biosynthesis. Catalyzes the dehydration of short chain beta-hydroxyacyl-ACPs and long chain saturated and unsaturated beta-hydroxyacyl-ACPs.</text>
</comment>
<comment type="catalytic activity">
    <reaction evidence="1">
        <text>a (3R)-hydroxyacyl-[ACP] = a (2E)-enoyl-[ACP] + H2O</text>
        <dbReference type="Rhea" id="RHEA:13097"/>
        <dbReference type="Rhea" id="RHEA-COMP:9925"/>
        <dbReference type="Rhea" id="RHEA-COMP:9945"/>
        <dbReference type="ChEBI" id="CHEBI:15377"/>
        <dbReference type="ChEBI" id="CHEBI:78784"/>
        <dbReference type="ChEBI" id="CHEBI:78827"/>
        <dbReference type="EC" id="4.2.1.59"/>
    </reaction>
</comment>
<comment type="subcellular location">
    <subcellularLocation>
        <location evidence="1">Cytoplasm</location>
    </subcellularLocation>
</comment>
<comment type="similarity">
    <text evidence="1">Belongs to the thioester dehydratase family. FabZ subfamily.</text>
</comment>
<proteinExistence type="inferred from homology"/>
<dbReference type="EC" id="4.2.1.59" evidence="1"/>
<dbReference type="EMBL" id="CP000687">
    <property type="protein sequence ID" value="ABY69017.1"/>
    <property type="molecule type" value="Genomic_DNA"/>
</dbReference>
<dbReference type="RefSeq" id="WP_005596447.1">
    <property type="nucleotide sequence ID" value="NC_010278.1"/>
</dbReference>
<dbReference type="SMR" id="B0BTR2"/>
<dbReference type="GeneID" id="48598576"/>
<dbReference type="KEGG" id="apj:APJL_0432"/>
<dbReference type="HOGENOM" id="CLU_078912_1_0_6"/>
<dbReference type="Proteomes" id="UP000008547">
    <property type="component" value="Chromosome"/>
</dbReference>
<dbReference type="GO" id="GO:0005737">
    <property type="term" value="C:cytoplasm"/>
    <property type="evidence" value="ECO:0007669"/>
    <property type="project" value="UniProtKB-SubCell"/>
</dbReference>
<dbReference type="GO" id="GO:0016020">
    <property type="term" value="C:membrane"/>
    <property type="evidence" value="ECO:0007669"/>
    <property type="project" value="GOC"/>
</dbReference>
<dbReference type="GO" id="GO:0019171">
    <property type="term" value="F:(3R)-hydroxyacyl-[acyl-carrier-protein] dehydratase activity"/>
    <property type="evidence" value="ECO:0007669"/>
    <property type="project" value="UniProtKB-EC"/>
</dbReference>
<dbReference type="GO" id="GO:0006633">
    <property type="term" value="P:fatty acid biosynthetic process"/>
    <property type="evidence" value="ECO:0007669"/>
    <property type="project" value="UniProtKB-UniRule"/>
</dbReference>
<dbReference type="GO" id="GO:0009245">
    <property type="term" value="P:lipid A biosynthetic process"/>
    <property type="evidence" value="ECO:0007669"/>
    <property type="project" value="UniProtKB-UniRule"/>
</dbReference>
<dbReference type="CDD" id="cd01288">
    <property type="entry name" value="FabZ"/>
    <property type="match status" value="1"/>
</dbReference>
<dbReference type="FunFam" id="3.10.129.10:FF:000001">
    <property type="entry name" value="3-hydroxyacyl-[acyl-carrier-protein] dehydratase FabZ"/>
    <property type="match status" value="1"/>
</dbReference>
<dbReference type="Gene3D" id="3.10.129.10">
    <property type="entry name" value="Hotdog Thioesterase"/>
    <property type="match status" value="1"/>
</dbReference>
<dbReference type="HAMAP" id="MF_00406">
    <property type="entry name" value="FabZ"/>
    <property type="match status" value="1"/>
</dbReference>
<dbReference type="InterPro" id="IPR013114">
    <property type="entry name" value="FabA_FabZ"/>
</dbReference>
<dbReference type="InterPro" id="IPR010084">
    <property type="entry name" value="FabZ"/>
</dbReference>
<dbReference type="InterPro" id="IPR029069">
    <property type="entry name" value="HotDog_dom_sf"/>
</dbReference>
<dbReference type="NCBIfam" id="TIGR01750">
    <property type="entry name" value="fabZ"/>
    <property type="match status" value="1"/>
</dbReference>
<dbReference type="NCBIfam" id="NF000582">
    <property type="entry name" value="PRK00006.1"/>
    <property type="match status" value="1"/>
</dbReference>
<dbReference type="PANTHER" id="PTHR30272">
    <property type="entry name" value="3-HYDROXYACYL-[ACYL-CARRIER-PROTEIN] DEHYDRATASE"/>
    <property type="match status" value="1"/>
</dbReference>
<dbReference type="PANTHER" id="PTHR30272:SF1">
    <property type="entry name" value="3-HYDROXYACYL-[ACYL-CARRIER-PROTEIN] DEHYDRATASE"/>
    <property type="match status" value="1"/>
</dbReference>
<dbReference type="Pfam" id="PF07977">
    <property type="entry name" value="FabA"/>
    <property type="match status" value="1"/>
</dbReference>
<dbReference type="SUPFAM" id="SSF54637">
    <property type="entry name" value="Thioesterase/thiol ester dehydrase-isomerase"/>
    <property type="match status" value="1"/>
</dbReference>
<name>FABZ_ACTPJ</name>
<reference key="1">
    <citation type="journal article" date="2008" name="PLoS ONE">
        <title>Genome biology of Actinobacillus pleuropneumoniae JL03, an isolate of serotype 3 prevalent in China.</title>
        <authorList>
            <person name="Xu Z."/>
            <person name="Zhou Y."/>
            <person name="Li L."/>
            <person name="Zhou R."/>
            <person name="Xiao S."/>
            <person name="Wan Y."/>
            <person name="Zhang S."/>
            <person name="Wang K."/>
            <person name="Li W."/>
            <person name="Li L."/>
            <person name="Jin H."/>
            <person name="Kang M."/>
            <person name="Dalai B."/>
            <person name="Li T."/>
            <person name="Liu L."/>
            <person name="Cheng Y."/>
            <person name="Zhang L."/>
            <person name="Xu T."/>
            <person name="Zheng H."/>
            <person name="Pu S."/>
            <person name="Wang B."/>
            <person name="Gu W."/>
            <person name="Zhang X.L."/>
            <person name="Zhu G.-F."/>
            <person name="Wang S."/>
            <person name="Zhao G.-P."/>
            <person name="Chen H."/>
        </authorList>
    </citation>
    <scope>NUCLEOTIDE SEQUENCE [LARGE SCALE GENOMIC DNA]</scope>
    <source>
        <strain>JL03</strain>
    </source>
</reference>
<gene>
    <name evidence="1" type="primary">fabZ</name>
    <name type="ordered locus">APJL_0432</name>
</gene>
<protein>
    <recommendedName>
        <fullName evidence="1">3-hydroxyacyl-[acyl-carrier-protein] dehydratase FabZ</fullName>
        <ecNumber evidence="1">4.2.1.59</ecNumber>
    </recommendedName>
    <alternativeName>
        <fullName evidence="1">(3R)-hydroxymyristoyl-[acyl-carrier-protein] dehydratase</fullName>
        <shortName evidence="1">(3R)-hydroxymyristoyl-ACP dehydrase</shortName>
    </alternativeName>
    <alternativeName>
        <fullName evidence="1">Beta-hydroxyacyl-ACP dehydratase</fullName>
    </alternativeName>
</protein>